<comment type="function">
    <text evidence="1">Catalyzes the specific phosphorylation of 1,6-anhydro-N-acetylmuramic acid (anhMurNAc) with the simultaneous cleavage of the 1,6-anhydro ring, generating MurNAc-6-P. Is required for the utilization of anhMurNAc either imported from the medium or derived from its own cell wall murein, and thus plays a role in cell wall recycling.</text>
</comment>
<comment type="catalytic activity">
    <reaction evidence="1">
        <text>1,6-anhydro-N-acetyl-beta-muramate + ATP + H2O = N-acetyl-D-muramate 6-phosphate + ADP + H(+)</text>
        <dbReference type="Rhea" id="RHEA:24952"/>
        <dbReference type="ChEBI" id="CHEBI:15377"/>
        <dbReference type="ChEBI" id="CHEBI:15378"/>
        <dbReference type="ChEBI" id="CHEBI:30616"/>
        <dbReference type="ChEBI" id="CHEBI:58690"/>
        <dbReference type="ChEBI" id="CHEBI:58722"/>
        <dbReference type="ChEBI" id="CHEBI:456216"/>
        <dbReference type="EC" id="2.7.1.170"/>
    </reaction>
</comment>
<comment type="pathway">
    <text evidence="1">Amino-sugar metabolism; 1,6-anhydro-N-acetylmuramate degradation.</text>
</comment>
<comment type="pathway">
    <text evidence="1">Cell wall biogenesis; peptidoglycan recycling.</text>
</comment>
<comment type="similarity">
    <text evidence="1">Belongs to the anhydro-N-acetylmuramic acid kinase family.</text>
</comment>
<organism>
    <name type="scientific">Pseudoalteromonas atlantica (strain T6c / ATCC BAA-1087)</name>
    <dbReference type="NCBI Taxonomy" id="3042615"/>
    <lineage>
        <taxon>Bacteria</taxon>
        <taxon>Pseudomonadati</taxon>
        <taxon>Pseudomonadota</taxon>
        <taxon>Gammaproteobacteria</taxon>
        <taxon>Alteromonadales</taxon>
        <taxon>Alteromonadaceae</taxon>
        <taxon>Paraglaciecola</taxon>
    </lineage>
</organism>
<gene>
    <name evidence="1" type="primary">anmK</name>
    <name type="ordered locus">Patl_2903</name>
</gene>
<protein>
    <recommendedName>
        <fullName evidence="1">Anhydro-N-acetylmuramic acid kinase</fullName>
        <ecNumber evidence="1">2.7.1.170</ecNumber>
    </recommendedName>
    <alternativeName>
        <fullName evidence="1">AnhMurNAc kinase</fullName>
    </alternativeName>
</protein>
<reference key="1">
    <citation type="submission" date="2006-06" db="EMBL/GenBank/DDBJ databases">
        <title>Complete sequence of Pseudoalteromonas atlantica T6c.</title>
        <authorList>
            <consortium name="US DOE Joint Genome Institute"/>
            <person name="Copeland A."/>
            <person name="Lucas S."/>
            <person name="Lapidus A."/>
            <person name="Barry K."/>
            <person name="Detter J.C."/>
            <person name="Glavina del Rio T."/>
            <person name="Hammon N."/>
            <person name="Israni S."/>
            <person name="Dalin E."/>
            <person name="Tice H."/>
            <person name="Pitluck S."/>
            <person name="Saunders E."/>
            <person name="Brettin T."/>
            <person name="Bruce D."/>
            <person name="Han C."/>
            <person name="Tapia R."/>
            <person name="Gilna P."/>
            <person name="Schmutz J."/>
            <person name="Larimer F."/>
            <person name="Land M."/>
            <person name="Hauser L."/>
            <person name="Kyrpides N."/>
            <person name="Kim E."/>
            <person name="Karls A.C."/>
            <person name="Bartlett D."/>
            <person name="Higgins B.P."/>
            <person name="Richardson P."/>
        </authorList>
    </citation>
    <scope>NUCLEOTIDE SEQUENCE [LARGE SCALE GENOMIC DNA]</scope>
    <source>
        <strain>T6c / ATCC BAA-1087</strain>
    </source>
</reference>
<accession>Q15RS7</accession>
<name>ANMK_PSEA6</name>
<proteinExistence type="inferred from homology"/>
<keyword id="KW-0067">ATP-binding</keyword>
<keyword id="KW-0119">Carbohydrate metabolism</keyword>
<keyword id="KW-0418">Kinase</keyword>
<keyword id="KW-0547">Nucleotide-binding</keyword>
<keyword id="KW-0808">Transferase</keyword>
<evidence type="ECO:0000255" key="1">
    <source>
        <dbReference type="HAMAP-Rule" id="MF_01270"/>
    </source>
</evidence>
<sequence length="401" mass="43490">MNKHIEQLYRSAKKRSRLIIGLMSGTSLDGLDVALCRIEGHGTDTQIELVAFCTVDYDDGYKQKIKSVFAKRQVDLQQVTLLNPWVGVLHGQMVNQCLEKWNIAATDIDAIASHGQTIYHCPLGQHGQSEFGNATLQIGDADHLAVTTGILTIGDFRQKHIAAGGEGAPLAVYGDYLFFTSKQENRILLNMGGIANLTFLPCSADASAVFSSDIGPGNTIMDAYVQRHFSPLHYDKDSAMASQGKVHLGLLDSLLEHAFFALDFPKTTGPEVFNLDYLSVAQAHSATRQLAHEDVLATLNLFSARTIANAINDAAIELEEFNVYASGGGIHNPLLMEHILRLCPNVTAIQDTSKLGIDPDAKEAVLFAILANECLVGGQQPFGNLEQGIPNITMGKISFPD</sequence>
<feature type="chain" id="PRO_1000073183" description="Anhydro-N-acetylmuramic acid kinase">
    <location>
        <begin position="1"/>
        <end position="401"/>
    </location>
</feature>
<feature type="binding site" evidence="1">
    <location>
        <begin position="25"/>
        <end position="32"/>
    </location>
    <ligand>
        <name>ATP</name>
        <dbReference type="ChEBI" id="CHEBI:30616"/>
    </ligand>
</feature>
<dbReference type="EC" id="2.7.1.170" evidence="1"/>
<dbReference type="EMBL" id="CP000388">
    <property type="protein sequence ID" value="ABG41411.1"/>
    <property type="molecule type" value="Genomic_DNA"/>
</dbReference>
<dbReference type="RefSeq" id="WP_011575667.1">
    <property type="nucleotide sequence ID" value="NC_008228.1"/>
</dbReference>
<dbReference type="SMR" id="Q15RS7"/>
<dbReference type="STRING" id="342610.Patl_2903"/>
<dbReference type="KEGG" id="pat:Patl_2903"/>
<dbReference type="eggNOG" id="COG2377">
    <property type="taxonomic scope" value="Bacteria"/>
</dbReference>
<dbReference type="HOGENOM" id="CLU_038782_1_0_6"/>
<dbReference type="OrthoDB" id="9763949at2"/>
<dbReference type="UniPathway" id="UPA00343"/>
<dbReference type="UniPathway" id="UPA00544"/>
<dbReference type="Proteomes" id="UP000001981">
    <property type="component" value="Chromosome"/>
</dbReference>
<dbReference type="GO" id="GO:0005524">
    <property type="term" value="F:ATP binding"/>
    <property type="evidence" value="ECO:0007669"/>
    <property type="project" value="UniProtKB-UniRule"/>
</dbReference>
<dbReference type="GO" id="GO:0016301">
    <property type="term" value="F:kinase activity"/>
    <property type="evidence" value="ECO:0007669"/>
    <property type="project" value="UniProtKB-KW"/>
</dbReference>
<dbReference type="GO" id="GO:0016773">
    <property type="term" value="F:phosphotransferase activity, alcohol group as acceptor"/>
    <property type="evidence" value="ECO:0007669"/>
    <property type="project" value="UniProtKB-UniRule"/>
</dbReference>
<dbReference type="GO" id="GO:0097175">
    <property type="term" value="P:1,6-anhydro-N-acetyl-beta-muramic acid catabolic process"/>
    <property type="evidence" value="ECO:0007669"/>
    <property type="project" value="UniProtKB-UniRule"/>
</dbReference>
<dbReference type="GO" id="GO:0006040">
    <property type="term" value="P:amino sugar metabolic process"/>
    <property type="evidence" value="ECO:0007669"/>
    <property type="project" value="InterPro"/>
</dbReference>
<dbReference type="GO" id="GO:0009254">
    <property type="term" value="P:peptidoglycan turnover"/>
    <property type="evidence" value="ECO:0007669"/>
    <property type="project" value="UniProtKB-UniRule"/>
</dbReference>
<dbReference type="CDD" id="cd24050">
    <property type="entry name" value="ASKHA_NBD_ANMK"/>
    <property type="match status" value="1"/>
</dbReference>
<dbReference type="Gene3D" id="3.30.420.40">
    <property type="match status" value="2"/>
</dbReference>
<dbReference type="HAMAP" id="MF_01270">
    <property type="entry name" value="AnhMurNAc_kinase"/>
    <property type="match status" value="1"/>
</dbReference>
<dbReference type="InterPro" id="IPR005338">
    <property type="entry name" value="Anhydro_N_Ac-Mur_kinase"/>
</dbReference>
<dbReference type="InterPro" id="IPR043129">
    <property type="entry name" value="ATPase_NBD"/>
</dbReference>
<dbReference type="NCBIfam" id="NF007149">
    <property type="entry name" value="PRK09585.3-4"/>
    <property type="match status" value="1"/>
</dbReference>
<dbReference type="PANTHER" id="PTHR30605">
    <property type="entry name" value="ANHYDRO-N-ACETYLMURAMIC ACID KINASE"/>
    <property type="match status" value="1"/>
</dbReference>
<dbReference type="PANTHER" id="PTHR30605:SF0">
    <property type="entry name" value="ANHYDRO-N-ACETYLMURAMIC ACID KINASE"/>
    <property type="match status" value="1"/>
</dbReference>
<dbReference type="Pfam" id="PF03702">
    <property type="entry name" value="AnmK"/>
    <property type="match status" value="1"/>
</dbReference>
<dbReference type="SUPFAM" id="SSF53067">
    <property type="entry name" value="Actin-like ATPase domain"/>
    <property type="match status" value="1"/>
</dbReference>